<geneLocation type="chloroplast"/>
<comment type="function">
    <text evidence="1">Involved in assembly of photosystem II.</text>
</comment>
<comment type="subcellular location">
    <subcellularLocation>
        <location>Plastid</location>
        <location>Chloroplast</location>
    </subcellularLocation>
</comment>
<comment type="similarity">
    <text evidence="2">Belongs to the NmrA-type oxidoreductase family. Ycf39 subfamily.</text>
</comment>
<protein>
    <recommendedName>
        <fullName evidence="2">Photosystem II assembly factor Ycf39</fullName>
        <ecNumber>1.-.-.-</ecNumber>
    </recommendedName>
</protein>
<name>YCF39_CYACA</name>
<proteinExistence type="inferred from homology"/>
<organism>
    <name type="scientific">Cyanidium caldarium</name>
    <name type="common">Red alga</name>
    <dbReference type="NCBI Taxonomy" id="2771"/>
    <lineage>
        <taxon>Eukaryota</taxon>
        <taxon>Rhodophyta</taxon>
        <taxon>Bangiophyceae</taxon>
        <taxon>Cyanidiales</taxon>
        <taxon>Cyanidiaceae</taxon>
        <taxon>Cyanidium</taxon>
    </lineage>
</organism>
<evidence type="ECO:0000250" key="1">
    <source>
        <dbReference type="UniProtKB" id="P74429"/>
    </source>
</evidence>
<evidence type="ECO:0000305" key="2"/>
<feature type="chain" id="PRO_0000204555" description="Photosystem II assembly factor Ycf39">
    <location>
        <begin position="1"/>
        <end position="312"/>
    </location>
</feature>
<accession>O19883</accession>
<reference key="1">
    <citation type="journal article" date="2000" name="J. Mol. Evol.">
        <title>The structure and gene repertoire of an ancient red algal plastid genome.</title>
        <authorList>
            <person name="Gloeckner G."/>
            <person name="Rosenthal A."/>
            <person name="Valentin K.-U."/>
        </authorList>
    </citation>
    <scope>NUCLEOTIDE SEQUENCE [LARGE SCALE GENOMIC DNA]</scope>
    <source>
        <strain>RK-1</strain>
    </source>
</reference>
<keyword id="KW-0150">Chloroplast</keyword>
<keyword id="KW-0560">Oxidoreductase</keyword>
<keyword id="KW-0602">Photosynthesis</keyword>
<keyword id="KW-0604">Photosystem II</keyword>
<keyword id="KW-0934">Plastid</keyword>
<gene>
    <name type="primary">ycf39</name>
    <name type="synonym">ycf3</name>
</gene>
<dbReference type="EC" id="1.-.-.-"/>
<dbReference type="EMBL" id="AF022186">
    <property type="protein sequence ID" value="AAB82706.1"/>
    <property type="molecule type" value="Genomic_DNA"/>
</dbReference>
<dbReference type="PIR" id="T11951">
    <property type="entry name" value="T11951"/>
</dbReference>
<dbReference type="RefSeq" id="NP_045055.1">
    <property type="nucleotide sequence ID" value="NC_001840.1"/>
</dbReference>
<dbReference type="SMR" id="O19883"/>
<dbReference type="GeneID" id="800257"/>
<dbReference type="GO" id="GO:0009507">
    <property type="term" value="C:chloroplast"/>
    <property type="evidence" value="ECO:0007669"/>
    <property type="project" value="UniProtKB-SubCell"/>
</dbReference>
<dbReference type="GO" id="GO:0009523">
    <property type="term" value="C:photosystem II"/>
    <property type="evidence" value="ECO:0007669"/>
    <property type="project" value="UniProtKB-KW"/>
</dbReference>
<dbReference type="GO" id="GO:0016491">
    <property type="term" value="F:oxidoreductase activity"/>
    <property type="evidence" value="ECO:0007669"/>
    <property type="project" value="UniProtKB-KW"/>
</dbReference>
<dbReference type="GO" id="GO:0015979">
    <property type="term" value="P:photosynthesis"/>
    <property type="evidence" value="ECO:0007669"/>
    <property type="project" value="UniProtKB-KW"/>
</dbReference>
<dbReference type="Gene3D" id="3.40.50.720">
    <property type="entry name" value="NAD(P)-binding Rossmann-like Domain"/>
    <property type="match status" value="1"/>
</dbReference>
<dbReference type="InterPro" id="IPR044256">
    <property type="entry name" value="HCF244-like"/>
</dbReference>
<dbReference type="InterPro" id="IPR016040">
    <property type="entry name" value="NAD(P)-bd_dom"/>
</dbReference>
<dbReference type="InterPro" id="IPR036291">
    <property type="entry name" value="NAD(P)-bd_dom_sf"/>
</dbReference>
<dbReference type="PANTHER" id="PTHR47128">
    <property type="match status" value="1"/>
</dbReference>
<dbReference type="PANTHER" id="PTHR47128:SF2">
    <property type="entry name" value="PROTEIN HIGH CHLOROPHYLL FLUORESCENCE PHENOTYPE 244, CHLOROPLASTIC"/>
    <property type="match status" value="1"/>
</dbReference>
<dbReference type="Pfam" id="PF13460">
    <property type="entry name" value="NAD_binding_10"/>
    <property type="match status" value="1"/>
</dbReference>
<dbReference type="SUPFAM" id="SSF51735">
    <property type="entry name" value="NAD(P)-binding Rossmann-fold domains"/>
    <property type="match status" value="1"/>
</dbReference>
<sequence length="312" mass="35388">MSLLVIGATSTLGRQIVKKALIQGYEVKCLVRNSKKAAFLKAWGAILVYGDLMVPETLPQCFVGASVIIDVSTVKVKDLNNDYTVDIYCKRAVLEAAIQAKVKKFVSFSMFNSSQYLDVPSTKIKSDFDRALIKSGINYLIFTPLGFFQDLTSQYAAPILSSQPVFILEQSESVQISYIDARDAANIVLAATSLAFLKNIDFPLIGNRSWNNVSIISLCQLYAGQASPVVTVPLLLVYFIRRILGFFAFTRQFYFYLTLVENLSRSSYLSFNHENENKFLKIYQKKLFSLEKYFQYYFTHKLGNLKKQINNF</sequence>